<comment type="similarity">
    <text evidence="1">Belongs to the bacterial ribosomal protein bS16 family.</text>
</comment>
<evidence type="ECO:0000255" key="1">
    <source>
        <dbReference type="HAMAP-Rule" id="MF_00385"/>
    </source>
</evidence>
<evidence type="ECO:0000305" key="2"/>
<sequence>MVTIRLSRGGAKKRPFYQIVVADSRSPRDGRFIERVGFFNPIAQGNAERLRINLERVNHWVAQGASLSDRVASLVKEAQKAA</sequence>
<protein>
    <recommendedName>
        <fullName evidence="1">Small ribosomal subunit protein bS16</fullName>
    </recommendedName>
    <alternativeName>
        <fullName evidence="2">30S ribosomal protein S16</fullName>
    </alternativeName>
</protein>
<gene>
    <name evidence="1" type="primary">rpsP</name>
    <name type="ordered locus">NTHI0301</name>
</gene>
<reference key="1">
    <citation type="journal article" date="2005" name="J. Bacteriol.">
        <title>Genomic sequence of an otitis media isolate of nontypeable Haemophilus influenzae: comparative study with H. influenzae serotype d, strain KW20.</title>
        <authorList>
            <person name="Harrison A."/>
            <person name="Dyer D.W."/>
            <person name="Gillaspy A."/>
            <person name="Ray W.C."/>
            <person name="Mungur R."/>
            <person name="Carson M.B."/>
            <person name="Zhong H."/>
            <person name="Gipson J."/>
            <person name="Gipson M."/>
            <person name="Johnson L.S."/>
            <person name="Lewis L."/>
            <person name="Bakaletz L.O."/>
            <person name="Munson R.S. Jr."/>
        </authorList>
    </citation>
    <scope>NUCLEOTIDE SEQUENCE [LARGE SCALE GENOMIC DNA]</scope>
    <source>
        <strain>86-028NP</strain>
    </source>
</reference>
<feature type="chain" id="PRO_0000243813" description="Small ribosomal subunit protein bS16">
    <location>
        <begin position="1"/>
        <end position="82"/>
    </location>
</feature>
<keyword id="KW-0687">Ribonucleoprotein</keyword>
<keyword id="KW-0689">Ribosomal protein</keyword>
<proteinExistence type="inferred from homology"/>
<accession>Q4QNY6</accession>
<name>RS16_HAEI8</name>
<dbReference type="EMBL" id="CP000057">
    <property type="protein sequence ID" value="AAX87261.1"/>
    <property type="molecule type" value="Genomic_DNA"/>
</dbReference>
<dbReference type="RefSeq" id="WP_005653865.1">
    <property type="nucleotide sequence ID" value="NC_007146.2"/>
</dbReference>
<dbReference type="SMR" id="Q4QNY6"/>
<dbReference type="GeneID" id="93219140"/>
<dbReference type="KEGG" id="hit:NTHI0301"/>
<dbReference type="HOGENOM" id="CLU_100590_5_1_6"/>
<dbReference type="Proteomes" id="UP000002525">
    <property type="component" value="Chromosome"/>
</dbReference>
<dbReference type="GO" id="GO:0005737">
    <property type="term" value="C:cytoplasm"/>
    <property type="evidence" value="ECO:0007669"/>
    <property type="project" value="UniProtKB-ARBA"/>
</dbReference>
<dbReference type="GO" id="GO:0015935">
    <property type="term" value="C:small ribosomal subunit"/>
    <property type="evidence" value="ECO:0007669"/>
    <property type="project" value="TreeGrafter"/>
</dbReference>
<dbReference type="GO" id="GO:0003735">
    <property type="term" value="F:structural constituent of ribosome"/>
    <property type="evidence" value="ECO:0007669"/>
    <property type="project" value="InterPro"/>
</dbReference>
<dbReference type="GO" id="GO:0006412">
    <property type="term" value="P:translation"/>
    <property type="evidence" value="ECO:0007669"/>
    <property type="project" value="UniProtKB-UniRule"/>
</dbReference>
<dbReference type="FunFam" id="3.30.1320.10:FF:000001">
    <property type="entry name" value="30S ribosomal protein S16"/>
    <property type="match status" value="1"/>
</dbReference>
<dbReference type="Gene3D" id="3.30.1320.10">
    <property type="match status" value="1"/>
</dbReference>
<dbReference type="HAMAP" id="MF_00385">
    <property type="entry name" value="Ribosomal_bS16"/>
    <property type="match status" value="1"/>
</dbReference>
<dbReference type="InterPro" id="IPR000307">
    <property type="entry name" value="Ribosomal_bS16"/>
</dbReference>
<dbReference type="InterPro" id="IPR020592">
    <property type="entry name" value="Ribosomal_bS16_CS"/>
</dbReference>
<dbReference type="InterPro" id="IPR023803">
    <property type="entry name" value="Ribosomal_bS16_dom_sf"/>
</dbReference>
<dbReference type="NCBIfam" id="TIGR00002">
    <property type="entry name" value="S16"/>
    <property type="match status" value="1"/>
</dbReference>
<dbReference type="PANTHER" id="PTHR12919">
    <property type="entry name" value="30S RIBOSOMAL PROTEIN S16"/>
    <property type="match status" value="1"/>
</dbReference>
<dbReference type="PANTHER" id="PTHR12919:SF20">
    <property type="entry name" value="SMALL RIBOSOMAL SUBUNIT PROTEIN BS16M"/>
    <property type="match status" value="1"/>
</dbReference>
<dbReference type="Pfam" id="PF00886">
    <property type="entry name" value="Ribosomal_S16"/>
    <property type="match status" value="1"/>
</dbReference>
<dbReference type="SUPFAM" id="SSF54565">
    <property type="entry name" value="Ribosomal protein S16"/>
    <property type="match status" value="1"/>
</dbReference>
<dbReference type="PROSITE" id="PS00732">
    <property type="entry name" value="RIBOSOMAL_S16"/>
    <property type="match status" value="1"/>
</dbReference>
<organism>
    <name type="scientific">Haemophilus influenzae (strain 86-028NP)</name>
    <dbReference type="NCBI Taxonomy" id="281310"/>
    <lineage>
        <taxon>Bacteria</taxon>
        <taxon>Pseudomonadati</taxon>
        <taxon>Pseudomonadota</taxon>
        <taxon>Gammaproteobacteria</taxon>
        <taxon>Pasteurellales</taxon>
        <taxon>Pasteurellaceae</taxon>
        <taxon>Haemophilus</taxon>
    </lineage>
</organism>